<accession>Q914L7</accession>
<organism>
    <name type="scientific">Sulfolobus islandicus filamentous virus (isolate Iceland/Hveragerdi)</name>
    <name type="common">SIFV</name>
    <dbReference type="NCBI Taxonomy" id="654908"/>
    <lineage>
        <taxon>Viruses</taxon>
        <taxon>Adnaviria</taxon>
        <taxon>Zilligvirae</taxon>
        <taxon>Taleaviricota</taxon>
        <taxon>Tokiviricetes</taxon>
        <taxon>Ligamenvirales</taxon>
        <taxon>Lipothrixviridae</taxon>
        <taxon>Betalipothrixvirus</taxon>
        <taxon>Sulfolobus islandicus filamentous virus</taxon>
    </lineage>
</organism>
<name>Y013_SIFVH</name>
<proteinExistence type="predicted"/>
<dbReference type="EMBL" id="AF440571">
    <property type="protein sequence ID" value="AAL27724.1"/>
    <property type="molecule type" value="Genomic_DNA"/>
</dbReference>
<dbReference type="RefSeq" id="NP_445678.1">
    <property type="nucleotide sequence ID" value="NC_003214.2"/>
</dbReference>
<dbReference type="SMR" id="Q914L7"/>
<dbReference type="GeneID" id="922333"/>
<dbReference type="KEGG" id="vg:922333"/>
<dbReference type="Proteomes" id="UP000007017">
    <property type="component" value="Segment"/>
</dbReference>
<dbReference type="GO" id="GO:0006355">
    <property type="term" value="P:regulation of DNA-templated transcription"/>
    <property type="evidence" value="ECO:0007669"/>
    <property type="project" value="InterPro"/>
</dbReference>
<dbReference type="Gene3D" id="1.10.1220.10">
    <property type="entry name" value="Met repressor-like"/>
    <property type="match status" value="1"/>
</dbReference>
<dbReference type="InterPro" id="IPR049123">
    <property type="entry name" value="56B_RHH"/>
</dbReference>
<dbReference type="InterPro" id="IPR013321">
    <property type="entry name" value="Arc_rbn_hlx_hlx"/>
</dbReference>
<dbReference type="InterPro" id="IPR010985">
    <property type="entry name" value="Ribbon_hlx_hlx"/>
</dbReference>
<dbReference type="Pfam" id="PF21432">
    <property type="entry name" value="56B_RHH"/>
    <property type="match status" value="1"/>
</dbReference>
<dbReference type="SUPFAM" id="SSF47598">
    <property type="entry name" value="Ribbon-helix-helix"/>
    <property type="match status" value="1"/>
</dbReference>
<organismHost>
    <name type="scientific">Saccharolobus islandicus</name>
    <name type="common">Sulfolobus islandicus</name>
    <dbReference type="NCBI Taxonomy" id="43080"/>
</organismHost>
<feature type="chain" id="PRO_0000385428" description="Uncharacterized protein 13">
    <location>
        <begin position="1"/>
        <end position="50"/>
    </location>
</feature>
<keyword id="KW-1185">Reference proteome</keyword>
<reference key="1">
    <citation type="journal article" date="2000" name="Virology">
        <title>A novel lipothrixvirus, SIFV, of the extremely thermophilic crenarchaeon Sulfolobus.</title>
        <authorList>
            <person name="Arnold H.P."/>
            <person name="Zillig W."/>
            <person name="Ziese U."/>
            <person name="Holz I."/>
            <person name="Crosby M."/>
            <person name="Utterback T."/>
            <person name="Weidmann J.F."/>
            <person name="Umayam L.A."/>
            <person name="Teffera K."/>
            <person name="Kristjanson J.K."/>
            <person name="Klenk H.P."/>
            <person name="Nelson K.E."/>
            <person name="Fraser C.M."/>
        </authorList>
    </citation>
    <scope>NUCLEOTIDE SEQUENCE [GENOMIC DNA]</scope>
</reference>
<gene>
    <name type="primary">SIFV0013</name>
</gene>
<protein>
    <recommendedName>
        <fullName>Uncharacterized protein 13</fullName>
    </recommendedName>
</protein>
<sequence>MTEQEEKVSFGITIPKSLKTRLKIYCAQNDKKIQDVIREALEEYLQRREK</sequence>